<sequence>MDASVSLLPEGESLHRSLSASQIQMLAFGGIIGTGLFLGIGSSLAESGPASLLISFSVLGVSVYCTMLALGEMSVYMPVAGSFCTYVGRYVDEALSFSLTWNYWLNDTIALASHVLATRLVVDFWLIPTEGDPVSASLSLPPWKEAVRIITPITSLSANIILNMLPVGGFGEIEYWLSSIKVFTVAAFIVNGILCNLGVNNEKKFIGFRYWKDPGAFNNGIIGVISSFVNAAFAYAGTESIALTAGEAKSPITTLPKAIRFTAHRVLLLYIISVLVVGINLPYNTPGLDGDSVRMSPFTFVFKKFGVPGAASIMNLVILSSALSAGNHSLYAGTRLLYSLAKSGHAPKVFSKCNKHGIPWLSVLATSATAILCLMSSQAGKTWGFLLNVIAVSNQISWIFIAVSSLRFRKALRVQGKTHRLYFPNWTYPVGPYIIILLNGVFLFLQGYKSLYPFRLSLFVSYYMEIPIVLGLYLIWKIYKKTKLVSSSEADLETDWKSLEDTDSA</sequence>
<dbReference type="EMBL" id="CU329672">
    <property type="protein sequence ID" value="CAC36935.1"/>
    <property type="molecule type" value="Genomic_DNA"/>
</dbReference>
<dbReference type="EMBL" id="AB027954">
    <property type="protein sequence ID" value="BAA87258.1"/>
    <property type="molecule type" value="Genomic_DNA"/>
</dbReference>
<dbReference type="RefSeq" id="NP_588425.1">
    <property type="nucleotide sequence ID" value="NM_001023416.2"/>
</dbReference>
<dbReference type="SMR" id="Q9C0V0"/>
<dbReference type="FunCoup" id="Q9C0V0">
    <property type="interactions" value="76"/>
</dbReference>
<dbReference type="STRING" id="284812.Q9C0V0"/>
<dbReference type="iPTMnet" id="Q9C0V0"/>
<dbReference type="PaxDb" id="4896-SPCPB1C11.02.1"/>
<dbReference type="EnsemblFungi" id="SPCPB1C11.02.1">
    <property type="protein sequence ID" value="SPCPB1C11.02.1:pep"/>
    <property type="gene ID" value="SPCPB1C11.02"/>
</dbReference>
<dbReference type="KEGG" id="spo:2539031"/>
<dbReference type="PomBase" id="SPCPB1C11.02"/>
<dbReference type="VEuPathDB" id="FungiDB:SPCPB1C11.02"/>
<dbReference type="eggNOG" id="KOG1286">
    <property type="taxonomic scope" value="Eukaryota"/>
</dbReference>
<dbReference type="HOGENOM" id="CLU_007946_12_2_1"/>
<dbReference type="InParanoid" id="Q9C0V0"/>
<dbReference type="OMA" id="AMFSTAN"/>
<dbReference type="PhylomeDB" id="Q9C0V0"/>
<dbReference type="PRO" id="PR:Q9C0V0"/>
<dbReference type="Proteomes" id="UP000002485">
    <property type="component" value="Chromosome III"/>
</dbReference>
<dbReference type="GO" id="GO:0016020">
    <property type="term" value="C:membrane"/>
    <property type="evidence" value="ECO:0000318"/>
    <property type="project" value="GO_Central"/>
</dbReference>
<dbReference type="GO" id="GO:0015171">
    <property type="term" value="F:amino acid transmembrane transporter activity"/>
    <property type="evidence" value="ECO:0000318"/>
    <property type="project" value="GO_Central"/>
</dbReference>
<dbReference type="GO" id="GO:0003333">
    <property type="term" value="P:amino acid transmembrane transport"/>
    <property type="evidence" value="ECO:0000318"/>
    <property type="project" value="GO_Central"/>
</dbReference>
<dbReference type="FunFam" id="1.20.1740.10:FF:000001">
    <property type="entry name" value="Amino acid permease"/>
    <property type="match status" value="1"/>
</dbReference>
<dbReference type="Gene3D" id="1.20.1740.10">
    <property type="entry name" value="Amino acid/polyamine transporter I"/>
    <property type="match status" value="1"/>
</dbReference>
<dbReference type="InterPro" id="IPR004841">
    <property type="entry name" value="AA-permease/SLC12A_dom"/>
</dbReference>
<dbReference type="InterPro" id="IPR004840">
    <property type="entry name" value="Amino_acid_permease_CS"/>
</dbReference>
<dbReference type="InterPro" id="IPR050524">
    <property type="entry name" value="APC_YAT"/>
</dbReference>
<dbReference type="PANTHER" id="PTHR43341">
    <property type="entry name" value="AMINO ACID PERMEASE"/>
    <property type="match status" value="1"/>
</dbReference>
<dbReference type="PANTHER" id="PTHR43341:SF3">
    <property type="entry name" value="AMINO-ACID PERMEASE PB1C11.02-RELATED"/>
    <property type="match status" value="1"/>
</dbReference>
<dbReference type="Pfam" id="PF00324">
    <property type="entry name" value="AA_permease"/>
    <property type="match status" value="1"/>
</dbReference>
<dbReference type="PIRSF" id="PIRSF006060">
    <property type="entry name" value="AA_transporter"/>
    <property type="match status" value="1"/>
</dbReference>
<dbReference type="PROSITE" id="PS00218">
    <property type="entry name" value="AMINO_ACID_PERMEASE_1"/>
    <property type="match status" value="1"/>
</dbReference>
<protein>
    <recommendedName>
        <fullName>Probable amino-acid permease PB1C11.02</fullName>
    </recommendedName>
</protein>
<organism>
    <name type="scientific">Schizosaccharomyces pombe (strain 972 / ATCC 24843)</name>
    <name type="common">Fission yeast</name>
    <dbReference type="NCBI Taxonomy" id="284812"/>
    <lineage>
        <taxon>Eukaryota</taxon>
        <taxon>Fungi</taxon>
        <taxon>Dikarya</taxon>
        <taxon>Ascomycota</taxon>
        <taxon>Taphrinomycotina</taxon>
        <taxon>Schizosaccharomycetes</taxon>
        <taxon>Schizosaccharomycetales</taxon>
        <taxon>Schizosaccharomycetaceae</taxon>
        <taxon>Schizosaccharomyces</taxon>
    </lineage>
</organism>
<name>YQD2_SCHPO</name>
<comment type="subcellular location">
    <subcellularLocation>
        <location evidence="2">Membrane</location>
        <topology evidence="2">Multi-pass membrane protein</topology>
    </subcellularLocation>
</comment>
<comment type="similarity">
    <text evidence="3">Belongs to the amino acid-polyamine-organocation (APC) superfamily.</text>
</comment>
<feature type="chain" id="PRO_0000054180" description="Probable amino-acid permease PB1C11.02">
    <location>
        <begin position="1"/>
        <end position="505"/>
    </location>
</feature>
<feature type="transmembrane region" description="Helical" evidence="1">
    <location>
        <begin position="25"/>
        <end position="45"/>
    </location>
</feature>
<feature type="transmembrane region" description="Helical" evidence="1">
    <location>
        <begin position="50"/>
        <end position="70"/>
    </location>
</feature>
<feature type="transmembrane region" description="Helical" evidence="1">
    <location>
        <begin position="149"/>
        <end position="169"/>
    </location>
</feature>
<feature type="transmembrane region" description="Helical" evidence="1">
    <location>
        <begin position="175"/>
        <end position="195"/>
    </location>
</feature>
<feature type="transmembrane region" description="Helical" evidence="1">
    <location>
        <begin position="221"/>
        <end position="241"/>
    </location>
</feature>
<feature type="transmembrane region" description="Helical" evidence="1">
    <location>
        <begin position="266"/>
        <end position="286"/>
    </location>
</feature>
<feature type="transmembrane region" description="Helical" evidence="1">
    <location>
        <begin position="305"/>
        <end position="325"/>
    </location>
</feature>
<feature type="transmembrane region" description="Helical" evidence="1">
    <location>
        <begin position="357"/>
        <end position="377"/>
    </location>
</feature>
<feature type="transmembrane region" description="Helical" evidence="1">
    <location>
        <begin position="383"/>
        <end position="403"/>
    </location>
</feature>
<feature type="transmembrane region" description="Helical" evidence="1">
    <location>
        <begin position="425"/>
        <end position="445"/>
    </location>
</feature>
<feature type="transmembrane region" description="Helical" evidence="1">
    <location>
        <begin position="456"/>
        <end position="476"/>
    </location>
</feature>
<feature type="sequence conflict" description="In Ref. 2; BAA87258." evidence="3" ref="2">
    <original>L</original>
    <variation>I</variation>
    <location>
        <position position="52"/>
    </location>
</feature>
<reference key="1">
    <citation type="journal article" date="2002" name="Nature">
        <title>The genome sequence of Schizosaccharomyces pombe.</title>
        <authorList>
            <person name="Wood V."/>
            <person name="Gwilliam R."/>
            <person name="Rajandream M.A."/>
            <person name="Lyne M.H."/>
            <person name="Lyne R."/>
            <person name="Stewart A."/>
            <person name="Sgouros J.G."/>
            <person name="Peat N."/>
            <person name="Hayles J."/>
            <person name="Baker S.G."/>
            <person name="Basham D."/>
            <person name="Bowman S."/>
            <person name="Brooks K."/>
            <person name="Brown D."/>
            <person name="Brown S."/>
            <person name="Chillingworth T."/>
            <person name="Churcher C.M."/>
            <person name="Collins M."/>
            <person name="Connor R."/>
            <person name="Cronin A."/>
            <person name="Davis P."/>
            <person name="Feltwell T."/>
            <person name="Fraser A."/>
            <person name="Gentles S."/>
            <person name="Goble A."/>
            <person name="Hamlin N."/>
            <person name="Harris D.E."/>
            <person name="Hidalgo J."/>
            <person name="Hodgson G."/>
            <person name="Holroyd S."/>
            <person name="Hornsby T."/>
            <person name="Howarth S."/>
            <person name="Huckle E.J."/>
            <person name="Hunt S."/>
            <person name="Jagels K."/>
            <person name="James K.D."/>
            <person name="Jones L."/>
            <person name="Jones M."/>
            <person name="Leather S."/>
            <person name="McDonald S."/>
            <person name="McLean J."/>
            <person name="Mooney P."/>
            <person name="Moule S."/>
            <person name="Mungall K.L."/>
            <person name="Murphy L.D."/>
            <person name="Niblett D."/>
            <person name="Odell C."/>
            <person name="Oliver K."/>
            <person name="O'Neil S."/>
            <person name="Pearson D."/>
            <person name="Quail M.A."/>
            <person name="Rabbinowitsch E."/>
            <person name="Rutherford K.M."/>
            <person name="Rutter S."/>
            <person name="Saunders D."/>
            <person name="Seeger K."/>
            <person name="Sharp S."/>
            <person name="Skelton J."/>
            <person name="Simmonds M.N."/>
            <person name="Squares R."/>
            <person name="Squares S."/>
            <person name="Stevens K."/>
            <person name="Taylor K."/>
            <person name="Taylor R.G."/>
            <person name="Tivey A."/>
            <person name="Walsh S.V."/>
            <person name="Warren T."/>
            <person name="Whitehead S."/>
            <person name="Woodward J.R."/>
            <person name="Volckaert G."/>
            <person name="Aert R."/>
            <person name="Robben J."/>
            <person name="Grymonprez B."/>
            <person name="Weltjens I."/>
            <person name="Vanstreels E."/>
            <person name="Rieger M."/>
            <person name="Schaefer M."/>
            <person name="Mueller-Auer S."/>
            <person name="Gabel C."/>
            <person name="Fuchs M."/>
            <person name="Duesterhoeft A."/>
            <person name="Fritzc C."/>
            <person name="Holzer E."/>
            <person name="Moestl D."/>
            <person name="Hilbert H."/>
            <person name="Borzym K."/>
            <person name="Langer I."/>
            <person name="Beck A."/>
            <person name="Lehrach H."/>
            <person name="Reinhardt R."/>
            <person name="Pohl T.M."/>
            <person name="Eger P."/>
            <person name="Zimmermann W."/>
            <person name="Wedler H."/>
            <person name="Wambutt R."/>
            <person name="Purnelle B."/>
            <person name="Goffeau A."/>
            <person name="Cadieu E."/>
            <person name="Dreano S."/>
            <person name="Gloux S."/>
            <person name="Lelaure V."/>
            <person name="Mottier S."/>
            <person name="Galibert F."/>
            <person name="Aves S.J."/>
            <person name="Xiang Z."/>
            <person name="Hunt C."/>
            <person name="Moore K."/>
            <person name="Hurst S.M."/>
            <person name="Lucas M."/>
            <person name="Rochet M."/>
            <person name="Gaillardin C."/>
            <person name="Tallada V.A."/>
            <person name="Garzon A."/>
            <person name="Thode G."/>
            <person name="Daga R.R."/>
            <person name="Cruzado L."/>
            <person name="Jimenez J."/>
            <person name="Sanchez M."/>
            <person name="del Rey F."/>
            <person name="Benito J."/>
            <person name="Dominguez A."/>
            <person name="Revuelta J.L."/>
            <person name="Moreno S."/>
            <person name="Armstrong J."/>
            <person name="Forsburg S.L."/>
            <person name="Cerutti L."/>
            <person name="Lowe T."/>
            <person name="McCombie W.R."/>
            <person name="Paulsen I."/>
            <person name="Potashkin J."/>
            <person name="Shpakovski G.V."/>
            <person name="Ussery D."/>
            <person name="Barrell B.G."/>
            <person name="Nurse P."/>
        </authorList>
    </citation>
    <scope>NUCLEOTIDE SEQUENCE [LARGE SCALE GENOMIC DNA]</scope>
    <source>
        <strain>972 / ATCC 24843</strain>
    </source>
</reference>
<reference key="2">
    <citation type="journal article" date="2000" name="Genes Cells">
        <title>Large-scale screening of intracellular protein localization in living fission yeast cells by the use of a GFP-fusion genomic DNA library.</title>
        <authorList>
            <person name="Ding D.-Q."/>
            <person name="Tomita Y."/>
            <person name="Yamamoto A."/>
            <person name="Chikashige Y."/>
            <person name="Haraguchi T."/>
            <person name="Hiraoka Y."/>
        </authorList>
    </citation>
    <scope>NUCLEOTIDE SEQUENCE [LARGE SCALE GENOMIC DNA] OF 20-132</scope>
    <scope>SUBCELLULAR LOCATION</scope>
    <source>
        <strain>ATCC 38364 / 968</strain>
    </source>
</reference>
<keyword id="KW-0029">Amino-acid transport</keyword>
<keyword id="KW-0472">Membrane</keyword>
<keyword id="KW-1185">Reference proteome</keyword>
<keyword id="KW-0812">Transmembrane</keyword>
<keyword id="KW-1133">Transmembrane helix</keyword>
<keyword id="KW-0813">Transport</keyword>
<evidence type="ECO:0000255" key="1"/>
<evidence type="ECO:0000269" key="2">
    <source>
    </source>
</evidence>
<evidence type="ECO:0000305" key="3"/>
<proteinExistence type="inferred from homology"/>
<accession>Q9C0V0</accession>
<accession>Q9UTW7</accession>
<gene>
    <name type="ORF">SPCPB1C11.02</name>
</gene>